<proteinExistence type="predicted"/>
<feature type="chain" id="PRO_0000330438" description="GATA zinc finger domain-containing protein 5">
    <location>
        <begin position="1"/>
        <end position="952"/>
    </location>
</feature>
<feature type="zinc finger region" description="GATA-type" evidence="1">
    <location>
        <begin position="241"/>
        <end position="266"/>
    </location>
</feature>
<feature type="region of interest" description="Disordered" evidence="2">
    <location>
        <begin position="1"/>
        <end position="36"/>
    </location>
</feature>
<feature type="region of interest" description="Disordered" evidence="2">
    <location>
        <begin position="138"/>
        <end position="197"/>
    </location>
</feature>
<feature type="region of interest" description="Disordered" evidence="2">
    <location>
        <begin position="380"/>
        <end position="418"/>
    </location>
</feature>
<feature type="region of interest" description="Disordered" evidence="2">
    <location>
        <begin position="433"/>
        <end position="478"/>
    </location>
</feature>
<feature type="region of interest" description="Disordered" evidence="2">
    <location>
        <begin position="634"/>
        <end position="699"/>
    </location>
</feature>
<feature type="region of interest" description="Disordered" evidence="2">
    <location>
        <begin position="732"/>
        <end position="816"/>
    </location>
</feature>
<feature type="compositionally biased region" description="Polar residues" evidence="2">
    <location>
        <begin position="10"/>
        <end position="24"/>
    </location>
</feature>
<feature type="compositionally biased region" description="Pro residues" evidence="2">
    <location>
        <begin position="148"/>
        <end position="157"/>
    </location>
</feature>
<feature type="compositionally biased region" description="Low complexity" evidence="2">
    <location>
        <begin position="158"/>
        <end position="196"/>
    </location>
</feature>
<feature type="compositionally biased region" description="Basic residues" evidence="2">
    <location>
        <begin position="393"/>
        <end position="412"/>
    </location>
</feature>
<feature type="compositionally biased region" description="Low complexity" evidence="2">
    <location>
        <begin position="445"/>
        <end position="467"/>
    </location>
</feature>
<feature type="compositionally biased region" description="Gly residues" evidence="2">
    <location>
        <begin position="468"/>
        <end position="478"/>
    </location>
</feature>
<feature type="compositionally biased region" description="Polar residues" evidence="2">
    <location>
        <begin position="634"/>
        <end position="653"/>
    </location>
</feature>
<feature type="compositionally biased region" description="Low complexity" evidence="2">
    <location>
        <begin position="654"/>
        <end position="668"/>
    </location>
</feature>
<feature type="compositionally biased region" description="Low complexity" evidence="2">
    <location>
        <begin position="678"/>
        <end position="699"/>
    </location>
</feature>
<feature type="compositionally biased region" description="Low complexity" evidence="2">
    <location>
        <begin position="732"/>
        <end position="745"/>
    </location>
</feature>
<feature type="compositionally biased region" description="Polar residues" evidence="2">
    <location>
        <begin position="746"/>
        <end position="762"/>
    </location>
</feature>
<feature type="compositionally biased region" description="Low complexity" evidence="2">
    <location>
        <begin position="763"/>
        <end position="814"/>
    </location>
</feature>
<reference key="1">
    <citation type="journal article" date="2005" name="Nature">
        <title>The genome of the social amoeba Dictyostelium discoideum.</title>
        <authorList>
            <person name="Eichinger L."/>
            <person name="Pachebat J.A."/>
            <person name="Gloeckner G."/>
            <person name="Rajandream M.A."/>
            <person name="Sucgang R."/>
            <person name="Berriman M."/>
            <person name="Song J."/>
            <person name="Olsen R."/>
            <person name="Szafranski K."/>
            <person name="Xu Q."/>
            <person name="Tunggal B."/>
            <person name="Kummerfeld S."/>
            <person name="Madera M."/>
            <person name="Konfortov B.A."/>
            <person name="Rivero F."/>
            <person name="Bankier A.T."/>
            <person name="Lehmann R."/>
            <person name="Hamlin N."/>
            <person name="Davies R."/>
            <person name="Gaudet P."/>
            <person name="Fey P."/>
            <person name="Pilcher K."/>
            <person name="Chen G."/>
            <person name="Saunders D."/>
            <person name="Sodergren E.J."/>
            <person name="Davis P."/>
            <person name="Kerhornou A."/>
            <person name="Nie X."/>
            <person name="Hall N."/>
            <person name="Anjard C."/>
            <person name="Hemphill L."/>
            <person name="Bason N."/>
            <person name="Farbrother P."/>
            <person name="Desany B."/>
            <person name="Just E."/>
            <person name="Morio T."/>
            <person name="Rost R."/>
            <person name="Churcher C.M."/>
            <person name="Cooper J."/>
            <person name="Haydock S."/>
            <person name="van Driessche N."/>
            <person name="Cronin A."/>
            <person name="Goodhead I."/>
            <person name="Muzny D.M."/>
            <person name="Mourier T."/>
            <person name="Pain A."/>
            <person name="Lu M."/>
            <person name="Harper D."/>
            <person name="Lindsay R."/>
            <person name="Hauser H."/>
            <person name="James K.D."/>
            <person name="Quiles M."/>
            <person name="Madan Babu M."/>
            <person name="Saito T."/>
            <person name="Buchrieser C."/>
            <person name="Wardroper A."/>
            <person name="Felder M."/>
            <person name="Thangavelu M."/>
            <person name="Johnson D."/>
            <person name="Knights A."/>
            <person name="Loulseged H."/>
            <person name="Mungall K.L."/>
            <person name="Oliver K."/>
            <person name="Price C."/>
            <person name="Quail M.A."/>
            <person name="Urushihara H."/>
            <person name="Hernandez J."/>
            <person name="Rabbinowitsch E."/>
            <person name="Steffen D."/>
            <person name="Sanders M."/>
            <person name="Ma J."/>
            <person name="Kohara Y."/>
            <person name="Sharp S."/>
            <person name="Simmonds M.N."/>
            <person name="Spiegler S."/>
            <person name="Tivey A."/>
            <person name="Sugano S."/>
            <person name="White B."/>
            <person name="Walker D."/>
            <person name="Woodward J.R."/>
            <person name="Winckler T."/>
            <person name="Tanaka Y."/>
            <person name="Shaulsky G."/>
            <person name="Schleicher M."/>
            <person name="Weinstock G.M."/>
            <person name="Rosenthal A."/>
            <person name="Cox E.C."/>
            <person name="Chisholm R.L."/>
            <person name="Gibbs R.A."/>
            <person name="Loomis W.F."/>
            <person name="Platzer M."/>
            <person name="Kay R.R."/>
            <person name="Williams J.G."/>
            <person name="Dear P.H."/>
            <person name="Noegel A.A."/>
            <person name="Barrell B.G."/>
            <person name="Kuspa A."/>
        </authorList>
    </citation>
    <scope>NUCLEOTIDE SEQUENCE [LARGE SCALE GENOMIC DNA]</scope>
    <source>
        <strain>AX4</strain>
    </source>
</reference>
<keyword id="KW-0479">Metal-binding</keyword>
<keyword id="KW-1185">Reference proteome</keyword>
<keyword id="KW-0862">Zinc</keyword>
<keyword id="KW-0863">Zinc-finger</keyword>
<sequence>MDYQLHEGKQISQEFPTDISTTKSSDLKSRKTDSPSIQRTHEFVNFSVFPIVNTNEIMNVDIKHFSPDLKCPTSPNIFLQPLTTTPNTTPNTSTTIDSNTEINPIEIQLQSPLLFQPEHLSPQTLKTTIPTFSIPTYPTPLNTKFQSSPPPPPPPPAATTTTTITTTTTTSAGNSTTKNNNNNNNNNNNNNGKSPKQFQDVLIPVTSSGKDGALYTVLENVPIKRTHRRRSANIDKDSLKCYQCNTSNTPEWRKGPEGPATLCNACGLAYAKKQKLTKNNIKFNQSTNVNNNTNNTITQLNQQINNQGLPNLTSTTTTSNNTAAAVNITTPSKRNNKYNTHRSKVFGEVAPSIVYTNGTLNNVGTPVSDTKKSHTFHEYMTPSNSFFTGKPIKTTKTKPKPKSKSKPGKITHTKHEQPQLNEQVQAIMEKNNLLSSSGGSGGAGSSSSSCGTSLNSSLGSSSGTITNSGGGSSGGGGGNLFSNQQLGFTCINNNVSNNNSNNNINNNDKQIQQQIQQVQQQVHQQVQQQLQQQQQVQQQQQQINQEPFLNQQNHYYQNIFQNVSTGNQNCAINTNGGFPQFESPMDIFPYNNNTTNCTQDSNGFVPNLANFEMQGNVLYNSSGSPSSLGQYVIQNNSFSGPNDQNPYVPSVSLNSNKTTNIKNNNNNKKNSKNKNNKNNKNNNNNTKINNHHINNNKNNVNTNQTIIKENNSQKQHQQQQQQQQQQQEQQKQQQEQQKQQEEQQQNLSINNSNQTNENEILGTTTTTTTSTATIITSQVPMNLSPNSDDNQSSSNYSTLSDSGSSPTDSFSGLSVNTPHPNCDSFSSSINNGSNCGSDIETIESPLQMSTDVLTINNCSSNRTTATNNNINNNNNNNNNNNNNNNKCSIKDDTFNLLTNSNLDSFGIIDCINGSSTNTNSFFMETPLLINDEDLLSSSNLTSSSELLPHSFV</sequence>
<name>GTAE_DICDI</name>
<evidence type="ECO:0000255" key="1">
    <source>
        <dbReference type="PROSITE-ProRule" id="PRU00094"/>
    </source>
</evidence>
<evidence type="ECO:0000256" key="2">
    <source>
        <dbReference type="SAM" id="MobiDB-lite"/>
    </source>
</evidence>
<gene>
    <name type="primary">gtaE</name>
    <name type="ORF">DDB_G0267640</name>
</gene>
<protein>
    <recommendedName>
        <fullName>GATA zinc finger domain-containing protein 5</fullName>
    </recommendedName>
</protein>
<accession>Q55GK0</accession>
<organism>
    <name type="scientific">Dictyostelium discoideum</name>
    <name type="common">Social amoeba</name>
    <dbReference type="NCBI Taxonomy" id="44689"/>
    <lineage>
        <taxon>Eukaryota</taxon>
        <taxon>Amoebozoa</taxon>
        <taxon>Evosea</taxon>
        <taxon>Eumycetozoa</taxon>
        <taxon>Dictyostelia</taxon>
        <taxon>Dictyosteliales</taxon>
        <taxon>Dictyosteliaceae</taxon>
        <taxon>Dictyostelium</taxon>
    </lineage>
</organism>
<dbReference type="EMBL" id="AAFI02000003">
    <property type="protein sequence ID" value="EAL73273.1"/>
    <property type="molecule type" value="Genomic_DNA"/>
</dbReference>
<dbReference type="RefSeq" id="XP_647184.1">
    <property type="nucleotide sequence ID" value="XM_642092.1"/>
</dbReference>
<dbReference type="SMR" id="Q55GK0"/>
<dbReference type="PaxDb" id="44689-DDB0220471"/>
<dbReference type="EnsemblProtists" id="EAL73273">
    <property type="protein sequence ID" value="EAL73273"/>
    <property type="gene ID" value="DDB_G0267640"/>
</dbReference>
<dbReference type="GeneID" id="8615988"/>
<dbReference type="KEGG" id="ddi:DDB_G0267640"/>
<dbReference type="dictyBase" id="DDB_G0267640">
    <property type="gene designation" value="gtaE"/>
</dbReference>
<dbReference type="VEuPathDB" id="AmoebaDB:DDB_G0267640"/>
<dbReference type="eggNOG" id="KOG1601">
    <property type="taxonomic scope" value="Eukaryota"/>
</dbReference>
<dbReference type="HOGENOM" id="CLU_309601_0_0_1"/>
<dbReference type="InParanoid" id="Q55GK0"/>
<dbReference type="PRO" id="PR:Q55GK0"/>
<dbReference type="Proteomes" id="UP000002195">
    <property type="component" value="Chromosome 1"/>
</dbReference>
<dbReference type="GO" id="GO:0043565">
    <property type="term" value="F:sequence-specific DNA binding"/>
    <property type="evidence" value="ECO:0007669"/>
    <property type="project" value="InterPro"/>
</dbReference>
<dbReference type="GO" id="GO:0008270">
    <property type="term" value="F:zinc ion binding"/>
    <property type="evidence" value="ECO:0007669"/>
    <property type="project" value="UniProtKB-KW"/>
</dbReference>
<dbReference type="GO" id="GO:0006355">
    <property type="term" value="P:regulation of DNA-templated transcription"/>
    <property type="evidence" value="ECO:0007669"/>
    <property type="project" value="InterPro"/>
</dbReference>
<dbReference type="CDD" id="cd00202">
    <property type="entry name" value="ZnF_GATA"/>
    <property type="match status" value="1"/>
</dbReference>
<dbReference type="Gene3D" id="3.30.50.10">
    <property type="entry name" value="Erythroid Transcription Factor GATA-1, subunit A"/>
    <property type="match status" value="1"/>
</dbReference>
<dbReference type="InterPro" id="IPR000679">
    <property type="entry name" value="Znf_GATA"/>
</dbReference>
<dbReference type="InterPro" id="IPR013088">
    <property type="entry name" value="Znf_NHR/GATA"/>
</dbReference>
<dbReference type="Pfam" id="PF00320">
    <property type="entry name" value="GATA"/>
    <property type="match status" value="1"/>
</dbReference>
<dbReference type="SMART" id="SM00401">
    <property type="entry name" value="ZnF_GATA"/>
    <property type="match status" value="1"/>
</dbReference>
<dbReference type="SUPFAM" id="SSF57716">
    <property type="entry name" value="Glucocorticoid receptor-like (DNA-binding domain)"/>
    <property type="match status" value="1"/>
</dbReference>
<dbReference type="PROSITE" id="PS00344">
    <property type="entry name" value="GATA_ZN_FINGER_1"/>
    <property type="match status" value="1"/>
</dbReference>
<dbReference type="PROSITE" id="PS50114">
    <property type="entry name" value="GATA_ZN_FINGER_2"/>
    <property type="match status" value="1"/>
</dbReference>